<comment type="function">
    <text evidence="1">Catalyzes the attachment of glutamate to tRNA(Glu) in a two-step reaction: glutamate is first activated by ATP to form Glu-AMP and then transferred to the acceptor end of tRNA(Glu).</text>
</comment>
<comment type="catalytic activity">
    <reaction evidence="1">
        <text>tRNA(Glu) + L-glutamate + ATP = L-glutamyl-tRNA(Glu) + AMP + diphosphate</text>
        <dbReference type="Rhea" id="RHEA:23540"/>
        <dbReference type="Rhea" id="RHEA-COMP:9663"/>
        <dbReference type="Rhea" id="RHEA-COMP:9680"/>
        <dbReference type="ChEBI" id="CHEBI:29985"/>
        <dbReference type="ChEBI" id="CHEBI:30616"/>
        <dbReference type="ChEBI" id="CHEBI:33019"/>
        <dbReference type="ChEBI" id="CHEBI:78442"/>
        <dbReference type="ChEBI" id="CHEBI:78520"/>
        <dbReference type="ChEBI" id="CHEBI:456215"/>
        <dbReference type="EC" id="6.1.1.17"/>
    </reaction>
</comment>
<comment type="subunit">
    <text evidence="1">Monomer.</text>
</comment>
<comment type="subcellular location">
    <subcellularLocation>
        <location evidence="1">Cytoplasm</location>
    </subcellularLocation>
</comment>
<comment type="similarity">
    <text evidence="1">Belongs to the class-I aminoacyl-tRNA synthetase family. Glutamate--tRNA ligase type 1 subfamily.</text>
</comment>
<sequence length="472" mass="52824">MNKTALKTRFAPSPSGLLHLGNIRTALFNALLARRSRGLFLLRIEDTDQERSSEEYVTALMEDLRWLALEWQEGPEVEGEAGPYRQSQRRSVYQADFQRLEAEKLAYPCFCSQEELERVRKRQLAAGQAPRYPGTCARLSPEEVEGKLAAGFKSALRFRVPSLTTIEFEDLVRGPQRFATGDIGDFIIRRTDGSPAFFFSNALDDALMGVTHVLRGEDHLTNTPRQILLLRALGLPIPRYGHIAMIVGRDGAPLSKRHGSRSVRELREAGYLPEALCNYLARLGHHYEDSGFLDLDTLAAQFDLARLGRAPARFDPQQLHHWQREALARCDLDTLERWLAPVAASQVPADKYQDFIETVRPNVVLPEDALHWAKVLFSEELVLKDGILPIIHEAGAQFFTQALAAVDGSGTDFKALAAQLKQTTGAKGRSLFLPLRAAFTGELDGPELARLLPLMGVARVRQRLQNCVDQSY</sequence>
<evidence type="ECO:0000255" key="1">
    <source>
        <dbReference type="HAMAP-Rule" id="MF_00022"/>
    </source>
</evidence>
<keyword id="KW-0030">Aminoacyl-tRNA synthetase</keyword>
<keyword id="KW-0067">ATP-binding</keyword>
<keyword id="KW-0963">Cytoplasm</keyword>
<keyword id="KW-0436">Ligase</keyword>
<keyword id="KW-0547">Nucleotide-binding</keyword>
<keyword id="KW-0648">Protein biosynthesis</keyword>
<keyword id="KW-1185">Reference proteome</keyword>
<feature type="chain" id="PRO_0000237378" description="Glutamate--tRNA ligase 2">
    <location>
        <begin position="1"/>
        <end position="472"/>
    </location>
</feature>
<feature type="short sequence motif" description="'HIGH' region" evidence="1">
    <location>
        <begin position="12"/>
        <end position="22"/>
    </location>
</feature>
<feature type="short sequence motif" description="'KMSKS' region" evidence="1">
    <location>
        <begin position="253"/>
        <end position="257"/>
    </location>
</feature>
<feature type="binding site" evidence="1">
    <location>
        <position position="256"/>
    </location>
    <ligand>
        <name>ATP</name>
        <dbReference type="ChEBI" id="CHEBI:30616"/>
    </ligand>
</feature>
<reference key="1">
    <citation type="journal article" date="2006" name="Appl. Environ. Microbiol.">
        <title>Complete genome sequence of the marine, chemolithoautotrophic, ammonia-oxidizing bacterium Nitrosococcus oceani ATCC 19707.</title>
        <authorList>
            <person name="Klotz M.G."/>
            <person name="Arp D.J."/>
            <person name="Chain P.S.G."/>
            <person name="El-Sheikh A.F."/>
            <person name="Hauser L.J."/>
            <person name="Hommes N.G."/>
            <person name="Larimer F.W."/>
            <person name="Malfatti S.A."/>
            <person name="Norton J.M."/>
            <person name="Poret-Peterson A.T."/>
            <person name="Vergez L.M."/>
            <person name="Ward B.B."/>
        </authorList>
    </citation>
    <scope>NUCLEOTIDE SEQUENCE [LARGE SCALE GENOMIC DNA]</scope>
    <source>
        <strain>ATCC 19707 / BCRC 17464 / JCM 30415 / NCIMB 11848 / C-107</strain>
    </source>
</reference>
<dbReference type="EC" id="6.1.1.17" evidence="1"/>
<dbReference type="EMBL" id="CP000127">
    <property type="protein sequence ID" value="ABA58708.1"/>
    <property type="molecule type" value="Genomic_DNA"/>
</dbReference>
<dbReference type="SMR" id="Q3J8Y8"/>
<dbReference type="STRING" id="323261.Noc_2250"/>
<dbReference type="KEGG" id="noc:Noc_2250"/>
<dbReference type="eggNOG" id="COG0008">
    <property type="taxonomic scope" value="Bacteria"/>
</dbReference>
<dbReference type="HOGENOM" id="CLU_015768_6_3_6"/>
<dbReference type="InParanoid" id="Q3J8Y8"/>
<dbReference type="Proteomes" id="UP000006838">
    <property type="component" value="Chromosome"/>
</dbReference>
<dbReference type="GO" id="GO:0005829">
    <property type="term" value="C:cytosol"/>
    <property type="evidence" value="ECO:0007669"/>
    <property type="project" value="TreeGrafter"/>
</dbReference>
<dbReference type="GO" id="GO:0005524">
    <property type="term" value="F:ATP binding"/>
    <property type="evidence" value="ECO:0007669"/>
    <property type="project" value="UniProtKB-UniRule"/>
</dbReference>
<dbReference type="GO" id="GO:0004818">
    <property type="term" value="F:glutamate-tRNA ligase activity"/>
    <property type="evidence" value="ECO:0007669"/>
    <property type="project" value="UniProtKB-UniRule"/>
</dbReference>
<dbReference type="GO" id="GO:0000049">
    <property type="term" value="F:tRNA binding"/>
    <property type="evidence" value="ECO:0007669"/>
    <property type="project" value="InterPro"/>
</dbReference>
<dbReference type="GO" id="GO:0008270">
    <property type="term" value="F:zinc ion binding"/>
    <property type="evidence" value="ECO:0007669"/>
    <property type="project" value="InterPro"/>
</dbReference>
<dbReference type="GO" id="GO:0006424">
    <property type="term" value="P:glutamyl-tRNA aminoacylation"/>
    <property type="evidence" value="ECO:0007669"/>
    <property type="project" value="UniProtKB-UniRule"/>
</dbReference>
<dbReference type="CDD" id="cd00808">
    <property type="entry name" value="GluRS_core"/>
    <property type="match status" value="1"/>
</dbReference>
<dbReference type="Gene3D" id="1.10.10.350">
    <property type="match status" value="1"/>
</dbReference>
<dbReference type="Gene3D" id="3.40.50.620">
    <property type="entry name" value="HUPs"/>
    <property type="match status" value="1"/>
</dbReference>
<dbReference type="HAMAP" id="MF_00022">
    <property type="entry name" value="Glu_tRNA_synth_type1"/>
    <property type="match status" value="1"/>
</dbReference>
<dbReference type="InterPro" id="IPR045462">
    <property type="entry name" value="aa-tRNA-synth_I_cd-bd"/>
</dbReference>
<dbReference type="InterPro" id="IPR020751">
    <property type="entry name" value="aa-tRNA-synth_I_codon-bd_sub2"/>
</dbReference>
<dbReference type="InterPro" id="IPR001412">
    <property type="entry name" value="aa-tRNA-synth_I_CS"/>
</dbReference>
<dbReference type="InterPro" id="IPR008925">
    <property type="entry name" value="aa_tRNA-synth_I_cd-bd_sf"/>
</dbReference>
<dbReference type="InterPro" id="IPR004527">
    <property type="entry name" value="Glu-tRNA-ligase_bac/mito"/>
</dbReference>
<dbReference type="InterPro" id="IPR000924">
    <property type="entry name" value="Glu/Gln-tRNA-synth"/>
</dbReference>
<dbReference type="InterPro" id="IPR020058">
    <property type="entry name" value="Glu/Gln-tRNA-synth_Ib_cat-dom"/>
</dbReference>
<dbReference type="InterPro" id="IPR049940">
    <property type="entry name" value="GluQ/Sye"/>
</dbReference>
<dbReference type="InterPro" id="IPR033910">
    <property type="entry name" value="GluRS_core"/>
</dbReference>
<dbReference type="InterPro" id="IPR014729">
    <property type="entry name" value="Rossmann-like_a/b/a_fold"/>
</dbReference>
<dbReference type="NCBIfam" id="TIGR00464">
    <property type="entry name" value="gltX_bact"/>
    <property type="match status" value="1"/>
</dbReference>
<dbReference type="NCBIfam" id="NF004315">
    <property type="entry name" value="PRK05710.1-4"/>
    <property type="match status" value="1"/>
</dbReference>
<dbReference type="PANTHER" id="PTHR43311">
    <property type="entry name" value="GLUTAMATE--TRNA LIGASE"/>
    <property type="match status" value="1"/>
</dbReference>
<dbReference type="PANTHER" id="PTHR43311:SF2">
    <property type="entry name" value="GLUTAMATE--TRNA LIGASE, MITOCHONDRIAL-RELATED"/>
    <property type="match status" value="1"/>
</dbReference>
<dbReference type="Pfam" id="PF19269">
    <property type="entry name" value="Anticodon_2"/>
    <property type="match status" value="1"/>
</dbReference>
<dbReference type="Pfam" id="PF00749">
    <property type="entry name" value="tRNA-synt_1c"/>
    <property type="match status" value="1"/>
</dbReference>
<dbReference type="PRINTS" id="PR00987">
    <property type="entry name" value="TRNASYNTHGLU"/>
</dbReference>
<dbReference type="SUPFAM" id="SSF48163">
    <property type="entry name" value="An anticodon-binding domain of class I aminoacyl-tRNA synthetases"/>
    <property type="match status" value="1"/>
</dbReference>
<dbReference type="SUPFAM" id="SSF52374">
    <property type="entry name" value="Nucleotidylyl transferase"/>
    <property type="match status" value="1"/>
</dbReference>
<dbReference type="PROSITE" id="PS00178">
    <property type="entry name" value="AA_TRNA_LIGASE_I"/>
    <property type="match status" value="1"/>
</dbReference>
<name>SYE2_NITOC</name>
<organism>
    <name type="scientific">Nitrosococcus oceani (strain ATCC 19707 / BCRC 17464 / JCM 30415 / NCIMB 11848 / C-107)</name>
    <dbReference type="NCBI Taxonomy" id="323261"/>
    <lineage>
        <taxon>Bacteria</taxon>
        <taxon>Pseudomonadati</taxon>
        <taxon>Pseudomonadota</taxon>
        <taxon>Gammaproteobacteria</taxon>
        <taxon>Chromatiales</taxon>
        <taxon>Chromatiaceae</taxon>
        <taxon>Nitrosococcus</taxon>
    </lineage>
</organism>
<gene>
    <name evidence="1" type="primary">gltX2</name>
    <name type="ordered locus">Noc_2250</name>
</gene>
<protein>
    <recommendedName>
        <fullName evidence="1">Glutamate--tRNA ligase 2</fullName>
        <ecNumber evidence="1">6.1.1.17</ecNumber>
    </recommendedName>
    <alternativeName>
        <fullName evidence="1">Glutamyl-tRNA synthetase 2</fullName>
        <shortName evidence="1">GluRS 2</shortName>
    </alternativeName>
</protein>
<accession>Q3J8Y8</accession>
<proteinExistence type="inferred from homology"/>